<dbReference type="EC" id="3.4.21.92" evidence="1"/>
<dbReference type="EMBL" id="DQ887676">
    <property type="protein sequence ID" value="ABH88321.1"/>
    <property type="molecule type" value="Genomic_DNA"/>
</dbReference>
<dbReference type="RefSeq" id="YP_784411.1">
    <property type="nucleotide sequence ID" value="NC_008456.1"/>
</dbReference>
<dbReference type="SMR" id="Q06GX2"/>
<dbReference type="MEROPS" id="S14.002"/>
<dbReference type="GeneID" id="4363597"/>
<dbReference type="GO" id="GO:0009570">
    <property type="term" value="C:chloroplast stroma"/>
    <property type="evidence" value="ECO:0007669"/>
    <property type="project" value="UniProtKB-SubCell"/>
</dbReference>
<dbReference type="GO" id="GO:0009368">
    <property type="term" value="C:endopeptidase Clp complex"/>
    <property type="evidence" value="ECO:0007669"/>
    <property type="project" value="TreeGrafter"/>
</dbReference>
<dbReference type="GO" id="GO:0004176">
    <property type="term" value="F:ATP-dependent peptidase activity"/>
    <property type="evidence" value="ECO:0007669"/>
    <property type="project" value="InterPro"/>
</dbReference>
<dbReference type="GO" id="GO:0051117">
    <property type="term" value="F:ATPase binding"/>
    <property type="evidence" value="ECO:0007669"/>
    <property type="project" value="TreeGrafter"/>
</dbReference>
<dbReference type="GO" id="GO:0004252">
    <property type="term" value="F:serine-type endopeptidase activity"/>
    <property type="evidence" value="ECO:0007669"/>
    <property type="project" value="UniProtKB-UniRule"/>
</dbReference>
<dbReference type="GO" id="GO:0006515">
    <property type="term" value="P:protein quality control for misfolded or incompletely synthesized proteins"/>
    <property type="evidence" value="ECO:0007669"/>
    <property type="project" value="TreeGrafter"/>
</dbReference>
<dbReference type="CDD" id="cd07017">
    <property type="entry name" value="S14_ClpP_2"/>
    <property type="match status" value="1"/>
</dbReference>
<dbReference type="FunFam" id="3.90.226.10:FF:000006">
    <property type="entry name" value="ATP-dependent Clp protease proteolytic subunit"/>
    <property type="match status" value="1"/>
</dbReference>
<dbReference type="Gene3D" id="3.90.226.10">
    <property type="entry name" value="2-enoyl-CoA Hydratase, Chain A, domain 1"/>
    <property type="match status" value="1"/>
</dbReference>
<dbReference type="HAMAP" id="MF_00444">
    <property type="entry name" value="ClpP"/>
    <property type="match status" value="1"/>
</dbReference>
<dbReference type="InterPro" id="IPR001907">
    <property type="entry name" value="ClpP"/>
</dbReference>
<dbReference type="InterPro" id="IPR029045">
    <property type="entry name" value="ClpP/crotonase-like_dom_sf"/>
</dbReference>
<dbReference type="InterPro" id="IPR023562">
    <property type="entry name" value="ClpP/TepA"/>
</dbReference>
<dbReference type="InterPro" id="IPR033135">
    <property type="entry name" value="ClpP_His_AS"/>
</dbReference>
<dbReference type="InterPro" id="IPR018215">
    <property type="entry name" value="ClpP_Ser_AS"/>
</dbReference>
<dbReference type="PANTHER" id="PTHR10381">
    <property type="entry name" value="ATP-DEPENDENT CLP PROTEASE PROTEOLYTIC SUBUNIT"/>
    <property type="match status" value="1"/>
</dbReference>
<dbReference type="PANTHER" id="PTHR10381:SF15">
    <property type="entry name" value="CHLOROPLASTIC ATP-DEPENDENT CLP PROTEASE PROTEOLYTIC SUBUNIT 1"/>
    <property type="match status" value="1"/>
</dbReference>
<dbReference type="Pfam" id="PF00574">
    <property type="entry name" value="CLP_protease"/>
    <property type="match status" value="1"/>
</dbReference>
<dbReference type="PRINTS" id="PR00127">
    <property type="entry name" value="CLPPROTEASEP"/>
</dbReference>
<dbReference type="SUPFAM" id="SSF52096">
    <property type="entry name" value="ClpP/crotonase"/>
    <property type="match status" value="1"/>
</dbReference>
<dbReference type="PROSITE" id="PS00382">
    <property type="entry name" value="CLP_PROTEASE_HIS"/>
    <property type="match status" value="1"/>
</dbReference>
<dbReference type="PROSITE" id="PS00381">
    <property type="entry name" value="CLP_PROTEASE_SER"/>
    <property type="match status" value="1"/>
</dbReference>
<protein>
    <recommendedName>
        <fullName evidence="1">ATP-dependent Clp protease proteolytic subunit</fullName>
        <ecNumber evidence="1">3.4.21.92</ecNumber>
    </recommendedName>
    <alternativeName>
        <fullName evidence="1">Endopeptidase Clp</fullName>
    </alternativeName>
</protein>
<sequence>MPIGVPKVPFRSPGEEDAVWVDVYNRLHRERLLFLGQEVDSEISNQLVGLMVYLSIEDDTRDLYLFINSPGGWVIPGIAIYDTMQFVPPDVHTICMGLAASMGSFILVGGEITKRLAFPHARVMIHQPASSFYEAPTGEFILEAEELLKLRETLTRVYVQRTGNPLWVISEDMERDVFMSATEAQAHGIVDVVAVENTGDFT</sequence>
<feature type="chain" id="PRO_0000275283" description="ATP-dependent Clp protease proteolytic subunit">
    <location>
        <begin position="1"/>
        <end position="202"/>
    </location>
</feature>
<feature type="active site" description="Nucleophile" evidence="1">
    <location>
        <position position="101"/>
    </location>
</feature>
<feature type="active site" evidence="1">
    <location>
        <position position="126"/>
    </location>
</feature>
<organism>
    <name type="scientific">Drimys granadensis</name>
    <dbReference type="NCBI Taxonomy" id="224735"/>
    <lineage>
        <taxon>Eukaryota</taxon>
        <taxon>Viridiplantae</taxon>
        <taxon>Streptophyta</taxon>
        <taxon>Embryophyta</taxon>
        <taxon>Tracheophyta</taxon>
        <taxon>Spermatophyta</taxon>
        <taxon>Magnoliopsida</taxon>
        <taxon>Magnoliidae</taxon>
        <taxon>Canellales</taxon>
        <taxon>Winteraceae</taxon>
        <taxon>Drimys</taxon>
    </lineage>
</organism>
<accession>Q06GX2</accession>
<reference key="1">
    <citation type="journal article" date="2006" name="BMC Evol. Biol.">
        <title>Complete plastid genome sequences of Drimys, Liriodendron, and Piper: implications for the phylogenetic relationships of magnoliids.</title>
        <authorList>
            <person name="Cai Z."/>
            <person name="Penaflor C."/>
            <person name="Kuehl J.V."/>
            <person name="Leebens-Mack J."/>
            <person name="Carlson J.E."/>
            <person name="dePamphilis C.W."/>
            <person name="Boore J.L."/>
            <person name="Jansen R.K."/>
        </authorList>
    </citation>
    <scope>NUCLEOTIDE SEQUENCE [LARGE SCALE GENOMIC DNA]</scope>
</reference>
<geneLocation type="chloroplast"/>
<evidence type="ECO:0000255" key="1">
    <source>
        <dbReference type="HAMAP-Rule" id="MF_00444"/>
    </source>
</evidence>
<name>CLPP_DRIGR</name>
<keyword id="KW-0150">Chloroplast</keyword>
<keyword id="KW-0378">Hydrolase</keyword>
<keyword id="KW-0934">Plastid</keyword>
<keyword id="KW-0645">Protease</keyword>
<keyword id="KW-0720">Serine protease</keyword>
<gene>
    <name evidence="1" type="primary">clpP</name>
</gene>
<comment type="function">
    <text evidence="1">Cleaves peptides in various proteins in a process that requires ATP hydrolysis. Has a chymotrypsin-like activity. Plays a major role in the degradation of misfolded proteins.</text>
</comment>
<comment type="catalytic activity">
    <reaction evidence="1">
        <text>Hydrolysis of proteins to small peptides in the presence of ATP and magnesium. alpha-casein is the usual test substrate. In the absence of ATP, only oligopeptides shorter than five residues are hydrolyzed (such as succinyl-Leu-Tyr-|-NHMec, and Leu-Tyr-Leu-|-Tyr-Trp, in which cleavage of the -Tyr-|-Leu- and -Tyr-|-Trp bonds also occurs).</text>
        <dbReference type="EC" id="3.4.21.92"/>
    </reaction>
</comment>
<comment type="subunit">
    <text>Component of the chloroplastic Clp protease core complex.</text>
</comment>
<comment type="subcellular location">
    <subcellularLocation>
        <location evidence="1">Plastid</location>
        <location evidence="1">Chloroplast stroma</location>
    </subcellularLocation>
</comment>
<comment type="similarity">
    <text evidence="1">Belongs to the peptidase S14 family.</text>
</comment>
<proteinExistence type="inferred from homology"/>